<name>EDNRB_RAT</name>
<sequence length="442" mass="49455">MQSSASRCGRALVALLLACGLLGVWGEKRGFPPAQATPSLLGTKEVMTPPTKTSWTRGSNSSLMRSSAPAEVTKGGRVAGVPPRSFPPPCQRKIEINKTFKYINTIVSCLVFVLGIIGNSTLLRIIYKNKCMRNGPNILIASLALGDLLHIIIDIPINAYKLLAGDWPFGAEMCKLVPFIQKASVGITVLSLCALSIDRYRAVASWSRIKGIGVPKWTAVEIVLIWVVSVVLAVPEAIGFDVITSDYKGKPLRVCMLNPFQKTAFMQFYKTAKDWWLFSFYFCLPLAITAIFYTLMTCEMLRKKSGMQIALNDHLKQRREVAKTVFCLVLVFALCWLPLHLSRILKLTLYDQSNPQRCELLSFLLVLDYIGINMASLNSCINPIALYLVSKRFKNCFKSCLCCWCQTFEEKQSLEEKQSCLKFKANDHGYDNFRSSNKYSSS</sequence>
<keyword id="KW-1003">Cell membrane</keyword>
<keyword id="KW-1015">Disulfide bond</keyword>
<keyword id="KW-0297">G-protein coupled receptor</keyword>
<keyword id="KW-0325">Glycoprotein</keyword>
<keyword id="KW-0449">Lipoprotein</keyword>
<keyword id="KW-0472">Membrane</keyword>
<keyword id="KW-0564">Palmitate</keyword>
<keyword id="KW-0597">Phosphoprotein</keyword>
<keyword id="KW-0675">Receptor</keyword>
<keyword id="KW-1185">Reference proteome</keyword>
<keyword id="KW-0732">Signal</keyword>
<keyword id="KW-0807">Transducer</keyword>
<keyword id="KW-0812">Transmembrane</keyword>
<keyword id="KW-1133">Transmembrane helix</keyword>
<feature type="signal peptide" evidence="3">
    <location>
        <begin position="1"/>
        <end position="26"/>
    </location>
</feature>
<feature type="chain" id="PRO_0000012733" description="Endothelin receptor type B">
    <location>
        <begin position="27"/>
        <end position="442"/>
    </location>
</feature>
<feature type="topological domain" description="Extracellular" evidence="3">
    <location>
        <begin position="27"/>
        <end position="101"/>
    </location>
</feature>
<feature type="transmembrane region" description="Helical; Name=1" evidence="3">
    <location>
        <begin position="102"/>
        <end position="126"/>
    </location>
</feature>
<feature type="topological domain" description="Cytoplasmic" evidence="3">
    <location>
        <begin position="127"/>
        <end position="137"/>
    </location>
</feature>
<feature type="transmembrane region" description="Helical; Name=2" evidence="3">
    <location>
        <begin position="138"/>
        <end position="163"/>
    </location>
</feature>
<feature type="topological domain" description="Extracellular" evidence="3">
    <location>
        <begin position="164"/>
        <end position="175"/>
    </location>
</feature>
<feature type="transmembrane region" description="Helical; Name=3" evidence="3">
    <location>
        <begin position="176"/>
        <end position="197"/>
    </location>
</feature>
<feature type="topological domain" description="Cytoplasmic" evidence="3">
    <location>
        <begin position="198"/>
        <end position="218"/>
    </location>
</feature>
<feature type="transmembrane region" description="Helical; Name=4" evidence="3">
    <location>
        <begin position="219"/>
        <end position="243"/>
    </location>
</feature>
<feature type="topological domain" description="Extracellular" evidence="3">
    <location>
        <begin position="244"/>
        <end position="271"/>
    </location>
</feature>
<feature type="transmembrane region" description="Helical; Name=5" evidence="3">
    <location>
        <begin position="272"/>
        <end position="296"/>
    </location>
</feature>
<feature type="topological domain" description="Cytoplasmic" evidence="3">
    <location>
        <begin position="297"/>
        <end position="324"/>
    </location>
</feature>
<feature type="transmembrane region" description="Helical; Name=6" evidence="3">
    <location>
        <begin position="325"/>
        <end position="350"/>
    </location>
</feature>
<feature type="topological domain" description="Extracellular" evidence="3">
    <location>
        <begin position="351"/>
        <end position="362"/>
    </location>
</feature>
<feature type="transmembrane region" description="Helical; Name=7" evidence="3">
    <location>
        <begin position="363"/>
        <end position="389"/>
    </location>
</feature>
<feature type="topological domain" description="Cytoplasmic" evidence="3">
    <location>
        <begin position="390"/>
        <end position="442"/>
    </location>
</feature>
<feature type="modified residue" description="Phosphoserine" evidence="2">
    <location>
        <position position="305"/>
    </location>
</feature>
<feature type="modified residue" description="Phosphoserine" evidence="2">
    <location>
        <position position="419"/>
    </location>
</feature>
<feature type="modified residue" description="Phosphotyrosine" evidence="2">
    <location>
        <position position="439"/>
    </location>
</feature>
<feature type="modified residue" description="Phosphoserine" evidence="2">
    <location>
        <position position="440"/>
    </location>
</feature>
<feature type="modified residue" description="Phosphoserine" evidence="2">
    <location>
        <position position="441"/>
    </location>
</feature>
<feature type="modified residue" description="Phosphoserine" evidence="2">
    <location>
        <position position="442"/>
    </location>
</feature>
<feature type="lipid moiety-binding region" description="S-palmitoyl cysteine" evidence="3">
    <location>
        <position position="402"/>
    </location>
</feature>
<feature type="lipid moiety-binding region" description="S-palmitoyl cysteine" evidence="3">
    <location>
        <position position="403"/>
    </location>
</feature>
<feature type="lipid moiety-binding region" description="S-palmitoyl cysteine" evidence="3">
    <location>
        <position position="405"/>
    </location>
</feature>
<feature type="glycosylation site" description="N-linked (GlcNAc...) asparagine" evidence="3">
    <location>
        <position position="60"/>
    </location>
</feature>
<feature type="glycosylation site" description="N-linked (GlcNAc...) asparagine" evidence="3">
    <location>
        <position position="97"/>
    </location>
</feature>
<feature type="disulfide bond" evidence="4">
    <location>
        <begin position="174"/>
        <end position="255"/>
    </location>
</feature>
<feature type="sequence conflict" description="In Ref. 2; CAA40916." evidence="5" ref="2">
    <original>SSAP</original>
    <variation>FRT</variation>
    <location>
        <begin position="66"/>
        <end position="69"/>
    </location>
</feature>
<reference key="1">
    <citation type="journal article" date="1992" name="Endocrinology">
        <title>Distinct tissue distribution and cellular localization of two messenger ribonucleic acids encoding different subtypes of rat endothelin receptors.</title>
        <authorList>
            <person name="Hori S."/>
            <person name="Komatsu Y."/>
            <person name="Shigemoto R."/>
            <person name="Mizuno N."/>
            <person name="Nakanishi S."/>
        </authorList>
    </citation>
    <scope>NUCLEOTIDE SEQUENCE [MRNA]</scope>
    <source>
        <tissue>Lung</tissue>
    </source>
</reference>
<reference key="2">
    <citation type="journal article" date="1990" name="Nature">
        <title>Cloning of a cDNA encoding a non-isopeptide-selective subtype of the endothelin receptor.</title>
        <authorList>
            <person name="Sakurai T."/>
            <person name="Yanagisawa M."/>
            <person name="Takuwa Y."/>
            <person name="Miyazaki H."/>
            <person name="Kimura S."/>
            <person name="Goto K."/>
            <person name="Masaki T."/>
        </authorList>
    </citation>
    <scope>NUCLEOTIDE SEQUENCE [MRNA]</scope>
    <source>
        <tissue>Lung</tissue>
    </source>
</reference>
<reference key="3">
    <citation type="journal article" date="1993" name="Mol. Pharmacol.">
        <title>Alternative transcript of the nonselective-type endothelin receptor from rat brain.</title>
        <authorList>
            <person name="Cheng H.F."/>
            <person name="Su Y.M."/>
            <person name="Yeh J.R."/>
            <person name="Chang K.J."/>
        </authorList>
    </citation>
    <scope>NUCLEOTIDE SEQUENCE [MRNA]</scope>
    <source>
        <tissue>Brain</tissue>
    </source>
</reference>
<accession>P21451</accession>
<protein>
    <recommendedName>
        <fullName evidence="5">Endothelin receptor type B</fullName>
        <shortName>ET-B</shortName>
        <shortName>ET-BR</shortName>
    </recommendedName>
    <alternativeName>
        <fullName>Endothelin receptor non-selective type</fullName>
    </alternativeName>
</protein>
<gene>
    <name evidence="6" type="primary">Ednrb</name>
</gene>
<proteinExistence type="evidence at transcript level"/>
<comment type="function">
    <text>Non-specific receptor for endothelin 1, 2, and 3. Mediates its action by association with G proteins that activate a phosphatidylinositol-calcium second messenger system.</text>
</comment>
<comment type="subcellular location">
    <subcellularLocation>
        <location evidence="1">Cell membrane</location>
        <topology>Multi-pass membrane protein</topology>
    </subcellularLocation>
    <text evidence="1">internalized after activation by endothelins.</text>
</comment>
<comment type="tissue specificity">
    <text>Widely distributed in cell types of a variety of tissues.</text>
</comment>
<comment type="similarity">
    <text evidence="4">Belongs to the G-protein coupled receptor 1 family. Endothelin receptor subfamily. EDNRB sub-subfamily.</text>
</comment>
<organism>
    <name type="scientific">Rattus norvegicus</name>
    <name type="common">Rat</name>
    <dbReference type="NCBI Taxonomy" id="10116"/>
    <lineage>
        <taxon>Eukaryota</taxon>
        <taxon>Metazoa</taxon>
        <taxon>Chordata</taxon>
        <taxon>Craniata</taxon>
        <taxon>Vertebrata</taxon>
        <taxon>Euteleostomi</taxon>
        <taxon>Mammalia</taxon>
        <taxon>Eutheria</taxon>
        <taxon>Euarchontoglires</taxon>
        <taxon>Glires</taxon>
        <taxon>Rodentia</taxon>
        <taxon>Myomorpha</taxon>
        <taxon>Muroidea</taxon>
        <taxon>Muridae</taxon>
        <taxon>Murinae</taxon>
        <taxon>Rattus</taxon>
    </lineage>
</organism>
<evidence type="ECO:0000250" key="1">
    <source>
        <dbReference type="UniProtKB" id="P24530"/>
    </source>
</evidence>
<evidence type="ECO:0000250" key="2">
    <source>
        <dbReference type="UniProtKB" id="P28088"/>
    </source>
</evidence>
<evidence type="ECO:0000255" key="3"/>
<evidence type="ECO:0000255" key="4">
    <source>
        <dbReference type="PROSITE-ProRule" id="PRU00521"/>
    </source>
</evidence>
<evidence type="ECO:0000305" key="5"/>
<evidence type="ECO:0000312" key="6">
    <source>
        <dbReference type="RGD" id="2536"/>
    </source>
</evidence>
<dbReference type="EMBL" id="X57764">
    <property type="protein sequence ID" value="CAA40916.1"/>
    <property type="molecule type" value="mRNA"/>
</dbReference>
<dbReference type="EMBL" id="S65355">
    <property type="protein sequence ID" value="AAB28172.1"/>
    <property type="molecule type" value="mRNA"/>
</dbReference>
<dbReference type="PIR" id="S13425">
    <property type="entry name" value="S13425"/>
</dbReference>
<dbReference type="RefSeq" id="NP_059029.1">
    <property type="nucleotide sequence ID" value="NM_017333.1"/>
</dbReference>
<dbReference type="RefSeq" id="XP_006252493.1">
    <property type="nucleotide sequence ID" value="XM_006252431.5"/>
</dbReference>
<dbReference type="RefSeq" id="XP_017455275.1">
    <property type="nucleotide sequence ID" value="XM_017599786.1"/>
</dbReference>
<dbReference type="SMR" id="P21451"/>
<dbReference type="CORUM" id="P21451"/>
<dbReference type="FunCoup" id="P21451">
    <property type="interactions" value="761"/>
</dbReference>
<dbReference type="STRING" id="10116.ENSRNOP00000014747"/>
<dbReference type="BindingDB" id="P21451"/>
<dbReference type="ChEMBL" id="CHEMBL4631"/>
<dbReference type="DrugCentral" id="P21451"/>
<dbReference type="GuidetoPHARMACOLOGY" id="220"/>
<dbReference type="GlyCosmos" id="P21451">
    <property type="glycosylation" value="2 sites, No reported glycans"/>
</dbReference>
<dbReference type="GlyGen" id="P21451">
    <property type="glycosylation" value="3 sites"/>
</dbReference>
<dbReference type="PhosphoSitePlus" id="P21451"/>
<dbReference type="PaxDb" id="10116-ENSRNOP00000014747"/>
<dbReference type="Ensembl" id="ENSRNOT00000014747.6">
    <property type="protein sequence ID" value="ENSRNOP00000014747.4"/>
    <property type="gene ID" value="ENSRNOG00000010997.6"/>
</dbReference>
<dbReference type="GeneID" id="50672"/>
<dbReference type="KEGG" id="rno:50672"/>
<dbReference type="UCSC" id="RGD:2536">
    <property type="organism name" value="rat"/>
</dbReference>
<dbReference type="AGR" id="RGD:2536"/>
<dbReference type="CTD" id="1910"/>
<dbReference type="RGD" id="2536">
    <property type="gene designation" value="Ednrb"/>
</dbReference>
<dbReference type="eggNOG" id="KOG3656">
    <property type="taxonomic scope" value="Eukaryota"/>
</dbReference>
<dbReference type="GeneTree" id="ENSGT01120000271837"/>
<dbReference type="HOGENOM" id="CLU_009579_28_0_1"/>
<dbReference type="InParanoid" id="P21451"/>
<dbReference type="OMA" id="YDQSDPN"/>
<dbReference type="OrthoDB" id="10037617at2759"/>
<dbReference type="PhylomeDB" id="P21451"/>
<dbReference type="Reactome" id="R-RNO-375276">
    <property type="pathway name" value="Peptide ligand-binding receptors"/>
</dbReference>
<dbReference type="Reactome" id="R-RNO-416476">
    <property type="pathway name" value="G alpha (q) signalling events"/>
</dbReference>
<dbReference type="PRO" id="PR:P21451"/>
<dbReference type="Proteomes" id="UP000002494">
    <property type="component" value="Chromosome 15"/>
</dbReference>
<dbReference type="Bgee" id="ENSRNOG00000010997">
    <property type="expression patterns" value="Expressed in lung and 19 other cell types or tissues"/>
</dbReference>
<dbReference type="GO" id="GO:0031965">
    <property type="term" value="C:nuclear membrane"/>
    <property type="evidence" value="ECO:0000314"/>
    <property type="project" value="RGD"/>
</dbReference>
<dbReference type="GO" id="GO:0005886">
    <property type="term" value="C:plasma membrane"/>
    <property type="evidence" value="ECO:0000266"/>
    <property type="project" value="RGD"/>
</dbReference>
<dbReference type="GO" id="GO:0004962">
    <property type="term" value="F:endothelin receptor activity"/>
    <property type="evidence" value="ECO:0000314"/>
    <property type="project" value="RGD"/>
</dbReference>
<dbReference type="GO" id="GO:0004930">
    <property type="term" value="F:G protein-coupled receptor activity"/>
    <property type="evidence" value="ECO:0000304"/>
    <property type="project" value="RGD"/>
</dbReference>
<dbReference type="GO" id="GO:0017046">
    <property type="term" value="F:peptide hormone binding"/>
    <property type="evidence" value="ECO:0000266"/>
    <property type="project" value="RGD"/>
</dbReference>
<dbReference type="GO" id="GO:0031702">
    <property type="term" value="F:type 1 angiotensin receptor binding"/>
    <property type="evidence" value="ECO:0000353"/>
    <property type="project" value="RGD"/>
</dbReference>
<dbReference type="GO" id="GO:0032341">
    <property type="term" value="P:aldosterone metabolic process"/>
    <property type="evidence" value="ECO:0000266"/>
    <property type="project" value="RGD"/>
</dbReference>
<dbReference type="GO" id="GO:0070588">
    <property type="term" value="P:calcium ion transmembrane transport"/>
    <property type="evidence" value="ECO:0000266"/>
    <property type="project" value="RGD"/>
</dbReference>
<dbReference type="GO" id="GO:0019722">
    <property type="term" value="P:calcium-mediated signaling"/>
    <property type="evidence" value="ECO:0000250"/>
    <property type="project" value="UniProtKB"/>
</dbReference>
<dbReference type="GO" id="GO:0060070">
    <property type="term" value="P:canonical Wnt signaling pathway"/>
    <property type="evidence" value="ECO:0000266"/>
    <property type="project" value="RGD"/>
</dbReference>
<dbReference type="GO" id="GO:0071222">
    <property type="term" value="P:cellular response to lipopolysaccharide"/>
    <property type="evidence" value="ECO:0000270"/>
    <property type="project" value="RGD"/>
</dbReference>
<dbReference type="GO" id="GO:0019934">
    <property type="term" value="P:cGMP-mediated signaling"/>
    <property type="evidence" value="ECO:0000315"/>
    <property type="project" value="RGD"/>
</dbReference>
<dbReference type="GO" id="GO:0160093">
    <property type="term" value="P:chordate pharynx development"/>
    <property type="evidence" value="ECO:0000266"/>
    <property type="project" value="RGD"/>
</dbReference>
<dbReference type="GO" id="GO:0048066">
    <property type="term" value="P:developmental pigmentation"/>
    <property type="evidence" value="ECO:0000266"/>
    <property type="project" value="RGD"/>
</dbReference>
<dbReference type="GO" id="GO:0086100">
    <property type="term" value="P:endothelin receptor signaling pathway"/>
    <property type="evidence" value="ECO:0000266"/>
    <property type="project" value="RGD"/>
</dbReference>
<dbReference type="GO" id="GO:0048484">
    <property type="term" value="P:enteric nervous system development"/>
    <property type="evidence" value="ECO:0000266"/>
    <property type="project" value="RGD"/>
</dbReference>
<dbReference type="GO" id="GO:0035645">
    <property type="term" value="P:enteric smooth muscle cell differentiation"/>
    <property type="evidence" value="ECO:0000266"/>
    <property type="project" value="RGD"/>
</dbReference>
<dbReference type="GO" id="GO:0042045">
    <property type="term" value="P:epithelial fluid transport"/>
    <property type="evidence" value="ECO:0000315"/>
    <property type="project" value="RGD"/>
</dbReference>
<dbReference type="GO" id="GO:0061028">
    <property type="term" value="P:establishment of endothelial barrier"/>
    <property type="evidence" value="ECO:0000266"/>
    <property type="project" value="RGD"/>
</dbReference>
<dbReference type="GO" id="GO:0007186">
    <property type="term" value="P:G protein-coupled receptor signaling pathway"/>
    <property type="evidence" value="ECO:0000266"/>
    <property type="project" value="RGD"/>
</dbReference>
<dbReference type="GO" id="GO:0010467">
    <property type="term" value="P:gene expression"/>
    <property type="evidence" value="ECO:0000266"/>
    <property type="project" value="RGD"/>
</dbReference>
<dbReference type="GO" id="GO:0030202">
    <property type="term" value="P:heparin proteoglycan metabolic process"/>
    <property type="evidence" value="ECO:0000266"/>
    <property type="project" value="RGD"/>
</dbReference>
<dbReference type="GO" id="GO:0048246">
    <property type="term" value="P:macrophage chemotaxis"/>
    <property type="evidence" value="ECO:0000266"/>
    <property type="project" value="RGD"/>
</dbReference>
<dbReference type="GO" id="GO:0030318">
    <property type="term" value="P:melanocyte differentiation"/>
    <property type="evidence" value="ECO:0000314"/>
    <property type="project" value="RGD"/>
</dbReference>
<dbReference type="GO" id="GO:0043066">
    <property type="term" value="P:negative regulation of apoptotic process"/>
    <property type="evidence" value="ECO:0000315"/>
    <property type="project" value="RGD"/>
</dbReference>
<dbReference type="GO" id="GO:0014043">
    <property type="term" value="P:negative regulation of neuron maturation"/>
    <property type="evidence" value="ECO:0000266"/>
    <property type="project" value="RGD"/>
</dbReference>
<dbReference type="GO" id="GO:0051248">
    <property type="term" value="P:negative regulation of protein metabolic process"/>
    <property type="evidence" value="ECO:0000266"/>
    <property type="project" value="RGD"/>
</dbReference>
<dbReference type="GO" id="GO:0000122">
    <property type="term" value="P:negative regulation of transcription by RNA polymerase II"/>
    <property type="evidence" value="ECO:0000266"/>
    <property type="project" value="RGD"/>
</dbReference>
<dbReference type="GO" id="GO:0001755">
    <property type="term" value="P:neural crest cell migration"/>
    <property type="evidence" value="ECO:0000266"/>
    <property type="project" value="RGD"/>
</dbReference>
<dbReference type="GO" id="GO:0097402">
    <property type="term" value="P:neuroblast migration"/>
    <property type="evidence" value="ECO:0000266"/>
    <property type="project" value="RGD"/>
</dbReference>
<dbReference type="GO" id="GO:0007422">
    <property type="term" value="P:peripheral nervous system development"/>
    <property type="evidence" value="ECO:0000266"/>
    <property type="project" value="RGD"/>
</dbReference>
<dbReference type="GO" id="GO:0007200">
    <property type="term" value="P:phospholipase C-activating G protein-coupled receptor signaling pathway"/>
    <property type="evidence" value="ECO:0000315"/>
    <property type="project" value="RGD"/>
</dbReference>
<dbReference type="GO" id="GO:0043473">
    <property type="term" value="P:pigmentation"/>
    <property type="evidence" value="ECO:0000315"/>
    <property type="project" value="RGD"/>
</dbReference>
<dbReference type="GO" id="GO:0072112">
    <property type="term" value="P:podocyte differentiation"/>
    <property type="evidence" value="ECO:0000266"/>
    <property type="project" value="RGD"/>
</dbReference>
<dbReference type="GO" id="GO:0043123">
    <property type="term" value="P:positive regulation of canonical NF-kappaB signal transduction"/>
    <property type="evidence" value="ECO:0000266"/>
    <property type="project" value="RGD"/>
</dbReference>
<dbReference type="GO" id="GO:0008284">
    <property type="term" value="P:positive regulation of cell population proliferation"/>
    <property type="evidence" value="ECO:0000315"/>
    <property type="project" value="RGD"/>
</dbReference>
<dbReference type="GO" id="GO:0007204">
    <property type="term" value="P:positive regulation of cytosolic calcium ion concentration"/>
    <property type="evidence" value="ECO:0000314"/>
    <property type="project" value="RGD"/>
</dbReference>
<dbReference type="GO" id="GO:0060406">
    <property type="term" value="P:positive regulation of penile erection"/>
    <property type="evidence" value="ECO:0000315"/>
    <property type="project" value="RGD"/>
</dbReference>
<dbReference type="GO" id="GO:0035810">
    <property type="term" value="P:positive regulation of urine volume"/>
    <property type="evidence" value="ECO:0000315"/>
    <property type="project" value="RGD"/>
</dbReference>
<dbReference type="GO" id="GO:0007497">
    <property type="term" value="P:posterior midgut development"/>
    <property type="evidence" value="ECO:0000266"/>
    <property type="project" value="RGD"/>
</dbReference>
<dbReference type="GO" id="GO:0071806">
    <property type="term" value="P:protein transmembrane transport"/>
    <property type="evidence" value="ECO:0000266"/>
    <property type="project" value="RGD"/>
</dbReference>
<dbReference type="GO" id="GO:0008217">
    <property type="term" value="P:regulation of blood pressure"/>
    <property type="evidence" value="ECO:0000315"/>
    <property type="project" value="RGD"/>
</dbReference>
<dbReference type="GO" id="GO:0050678">
    <property type="term" value="P:regulation of epithelial cell proliferation"/>
    <property type="evidence" value="ECO:0000315"/>
    <property type="project" value="RGD"/>
</dbReference>
<dbReference type="GO" id="GO:0031620">
    <property type="term" value="P:regulation of fever generation"/>
    <property type="evidence" value="ECO:0000315"/>
    <property type="project" value="RGD"/>
</dbReference>
<dbReference type="GO" id="GO:0002027">
    <property type="term" value="P:regulation of heart rate"/>
    <property type="evidence" value="ECO:0000266"/>
    <property type="project" value="RGD"/>
</dbReference>
<dbReference type="GO" id="GO:0006885">
    <property type="term" value="P:regulation of pH"/>
    <property type="evidence" value="ECO:0000266"/>
    <property type="project" value="RGD"/>
</dbReference>
<dbReference type="GO" id="GO:0097018">
    <property type="term" value="P:renal albumin absorption"/>
    <property type="evidence" value="ECO:0000266"/>
    <property type="project" value="RGD"/>
</dbReference>
<dbReference type="GO" id="GO:0035812">
    <property type="term" value="P:renal sodium excretion"/>
    <property type="evidence" value="ECO:0000266"/>
    <property type="project" value="RGD"/>
</dbReference>
<dbReference type="GO" id="GO:0070294">
    <property type="term" value="P:renal sodium ion absorption"/>
    <property type="evidence" value="ECO:0000266"/>
    <property type="project" value="RGD"/>
</dbReference>
<dbReference type="GO" id="GO:0002001">
    <property type="term" value="P:renin secretion into blood stream"/>
    <property type="evidence" value="ECO:0000266"/>
    <property type="project" value="RGD"/>
</dbReference>
<dbReference type="GO" id="GO:1990839">
    <property type="term" value="P:response to endothelin"/>
    <property type="evidence" value="ECO:0000315"/>
    <property type="project" value="RGD"/>
</dbReference>
<dbReference type="GO" id="GO:0032496">
    <property type="term" value="P:response to lipopolysaccharide"/>
    <property type="evidence" value="ECO:0000315"/>
    <property type="project" value="RGD"/>
</dbReference>
<dbReference type="GO" id="GO:0048265">
    <property type="term" value="P:response to pain"/>
    <property type="evidence" value="ECO:0000315"/>
    <property type="project" value="RGD"/>
</dbReference>
<dbReference type="GO" id="GO:1904383">
    <property type="term" value="P:response to sodium phosphate"/>
    <property type="evidence" value="ECO:0000266"/>
    <property type="project" value="RGD"/>
</dbReference>
<dbReference type="GO" id="GO:0055078">
    <property type="term" value="P:sodium ion homeostasis"/>
    <property type="evidence" value="ECO:0000266"/>
    <property type="project" value="RGD"/>
</dbReference>
<dbReference type="GO" id="GO:0042310">
    <property type="term" value="P:vasoconstriction"/>
    <property type="evidence" value="ECO:0000315"/>
    <property type="project" value="RGD"/>
</dbReference>
<dbReference type="GO" id="GO:0042311">
    <property type="term" value="P:vasodilation"/>
    <property type="evidence" value="ECO:0000315"/>
    <property type="project" value="RGD"/>
</dbReference>
<dbReference type="GO" id="GO:0014826">
    <property type="term" value="P:vein smooth muscle contraction"/>
    <property type="evidence" value="ECO:0000266"/>
    <property type="project" value="RGD"/>
</dbReference>
<dbReference type="CDD" id="cd15976">
    <property type="entry name" value="7tmA_ET-BR"/>
    <property type="match status" value="1"/>
</dbReference>
<dbReference type="FunFam" id="1.20.1070.10:FF:000076">
    <property type="entry name" value="Endothelin receptor type B"/>
    <property type="match status" value="1"/>
</dbReference>
<dbReference type="Gene3D" id="1.20.1070.10">
    <property type="entry name" value="Rhodopsin 7-helix transmembrane proteins"/>
    <property type="match status" value="1"/>
</dbReference>
<dbReference type="InterPro" id="IPR000499">
    <property type="entry name" value="Endthln_rcpt"/>
</dbReference>
<dbReference type="InterPro" id="IPR001112">
    <property type="entry name" value="ETB_rcpt"/>
</dbReference>
<dbReference type="InterPro" id="IPR051193">
    <property type="entry name" value="GPCR_endothelin_rcpt"/>
</dbReference>
<dbReference type="InterPro" id="IPR000276">
    <property type="entry name" value="GPCR_Rhodpsn"/>
</dbReference>
<dbReference type="InterPro" id="IPR017452">
    <property type="entry name" value="GPCR_Rhodpsn_7TM"/>
</dbReference>
<dbReference type="PANTHER" id="PTHR46099:SF3">
    <property type="entry name" value="ENDOTHELIN RECEPTOR TYPE B"/>
    <property type="match status" value="1"/>
</dbReference>
<dbReference type="PANTHER" id="PTHR46099">
    <property type="entry name" value="G_PROTEIN_RECEP_F1_2 DOMAIN-CONTAINING PROTEIN"/>
    <property type="match status" value="1"/>
</dbReference>
<dbReference type="Pfam" id="PF00001">
    <property type="entry name" value="7tm_1"/>
    <property type="match status" value="1"/>
</dbReference>
<dbReference type="PRINTS" id="PR00571">
    <property type="entry name" value="ENDOTHELINBR"/>
</dbReference>
<dbReference type="PRINTS" id="PR00366">
    <property type="entry name" value="ENDOTHELINR"/>
</dbReference>
<dbReference type="PRINTS" id="PR00237">
    <property type="entry name" value="GPCRRHODOPSN"/>
</dbReference>
<dbReference type="SMART" id="SM01381">
    <property type="entry name" value="7TM_GPCR_Srsx"/>
    <property type="match status" value="1"/>
</dbReference>
<dbReference type="SUPFAM" id="SSF81321">
    <property type="entry name" value="Family A G protein-coupled receptor-like"/>
    <property type="match status" value="1"/>
</dbReference>
<dbReference type="PROSITE" id="PS00237">
    <property type="entry name" value="G_PROTEIN_RECEP_F1_1"/>
    <property type="match status" value="1"/>
</dbReference>
<dbReference type="PROSITE" id="PS50262">
    <property type="entry name" value="G_PROTEIN_RECEP_F1_2"/>
    <property type="match status" value="1"/>
</dbReference>